<name>FA53A_MOUSE</name>
<evidence type="ECO:0000250" key="1">
    <source>
        <dbReference type="UniProtKB" id="Q5ZKN5"/>
    </source>
</evidence>
<evidence type="ECO:0000250" key="2">
    <source>
        <dbReference type="UniProtKB" id="Q6NSI3"/>
    </source>
</evidence>
<evidence type="ECO:0000255" key="3"/>
<evidence type="ECO:0000256" key="4">
    <source>
        <dbReference type="SAM" id="MobiDB-lite"/>
    </source>
</evidence>
<evidence type="ECO:0000303" key="5">
    <source>
    </source>
</evidence>
<evidence type="ECO:0000305" key="6"/>
<evidence type="ECO:0000312" key="7">
    <source>
        <dbReference type="MGI" id="MGI:1919225"/>
    </source>
</evidence>
<evidence type="ECO:0007744" key="8">
    <source>
    </source>
</evidence>
<accession>E9PV82</accession>
<accession>Q8R2K2</accession>
<accession>Q8R5K1</accession>
<accession>Q91VG1</accession>
<reference key="1">
    <citation type="journal article" date="2002" name="Dev. Dyn.">
        <title>Isolation of DNTNP, which encodes a potential nuclear protein that is expressed in the developing, dorsal neural tube.</title>
        <authorList>
            <person name="Jun L."/>
            <person name="Balboni A.L."/>
            <person name="Laitman J.T."/>
            <person name="Bergemann A.D."/>
        </authorList>
    </citation>
    <scope>NUCLEOTIDE SEQUENCE [MRNA]</scope>
</reference>
<reference key="2">
    <citation type="journal article" date="2009" name="PLoS Biol.">
        <title>Lineage-specific biology revealed by a finished genome assembly of the mouse.</title>
        <authorList>
            <person name="Church D.M."/>
            <person name="Goodstadt L."/>
            <person name="Hillier L.W."/>
            <person name="Zody M.C."/>
            <person name="Goldstein S."/>
            <person name="She X."/>
            <person name="Bult C.J."/>
            <person name="Agarwala R."/>
            <person name="Cherry J.L."/>
            <person name="DiCuccio M."/>
            <person name="Hlavina W."/>
            <person name="Kapustin Y."/>
            <person name="Meric P."/>
            <person name="Maglott D."/>
            <person name="Birtle Z."/>
            <person name="Marques A.C."/>
            <person name="Graves T."/>
            <person name="Zhou S."/>
            <person name="Teague B."/>
            <person name="Potamousis K."/>
            <person name="Churas C."/>
            <person name="Place M."/>
            <person name="Herschleb J."/>
            <person name="Runnheim R."/>
            <person name="Forrest D."/>
            <person name="Amos-Landgraf J."/>
            <person name="Schwartz D.C."/>
            <person name="Cheng Z."/>
            <person name="Lindblad-Toh K."/>
            <person name="Eichler E.E."/>
            <person name="Ponting C.P."/>
        </authorList>
    </citation>
    <scope>NUCLEOTIDE SEQUENCE [LARGE SCALE GENOMIC DNA]</scope>
    <source>
        <strain>C57BL/6J</strain>
    </source>
</reference>
<reference key="3">
    <citation type="journal article" date="2004" name="Genome Res.">
        <title>The status, quality, and expansion of the NIH full-length cDNA project: the Mammalian Gene Collection (MGC).</title>
        <authorList>
            <consortium name="The MGC Project Team"/>
        </authorList>
    </citation>
    <scope>NUCLEOTIDE SEQUENCE [LARGE SCALE MRNA]</scope>
    <source>
        <strain>C57BL/6J</strain>
        <tissue>Mammary gland</tissue>
    </source>
</reference>
<reference key="4">
    <citation type="journal article" date="2010" name="Cell">
        <title>A tissue-specific atlas of mouse protein phosphorylation and expression.</title>
        <authorList>
            <person name="Huttlin E.L."/>
            <person name="Jedrychowski M.P."/>
            <person name="Elias J.E."/>
            <person name="Goswami T."/>
            <person name="Rad R."/>
            <person name="Beausoleil S.A."/>
            <person name="Villen J."/>
            <person name="Haas W."/>
            <person name="Sowa M.E."/>
            <person name="Gygi S.P."/>
        </authorList>
    </citation>
    <scope>PHOSPHORYLATION [LARGE SCALE ANALYSIS] AT SER-306 AND SER-309</scope>
    <scope>IDENTIFICATION BY MASS SPECTROMETRY [LARGE SCALE ANALYSIS]</scope>
    <source>
        <tissue>Kidney</tissue>
        <tissue>Testis</tissue>
    </source>
</reference>
<proteinExistence type="evidence at protein level"/>
<keyword id="KW-0539">Nucleus</keyword>
<keyword id="KW-0597">Phosphoprotein</keyword>
<keyword id="KW-1185">Reference proteome</keyword>
<sequence length="402" mass="43084">MVTLITEKLQNQSLDDLTRRACEAGPYSAEKLNKSGHLFPLEISVDKSPWKALRGGWPTGSQAASGPFSVGPHGVSHTEGLKWQLESPGPMDVGHFLDLHDSTGPPAAPPTKRHCRSLSEPEELARCRSPWRPGSSKVWTPISKRRCNSGGSATLQCCSGVGNPTLQGTLVPGLPRRPVSPAGPTSPLTPRPASASSGFVDGSEGSTSSGPPWLSTGPCPFSSRRRLSLSQEHLVDTGACLPSASSTPTSTPELGRHHGLLRCRSQPCVLDGRRVRRKRRREEDARWTRPSLDFLKMTRTLKNSKSLCSLDYEDDEDDTQEKTLVSSPCNSQGLVGIITPSSSPRIPRPGPDSPSIWASGEPEANPGEGGSSGDPSDWDSAGEEGIFPLDHGDLDLEQIENN</sequence>
<organism>
    <name type="scientific">Mus musculus</name>
    <name type="common">Mouse</name>
    <dbReference type="NCBI Taxonomy" id="10090"/>
    <lineage>
        <taxon>Eukaryota</taxon>
        <taxon>Metazoa</taxon>
        <taxon>Chordata</taxon>
        <taxon>Craniata</taxon>
        <taxon>Vertebrata</taxon>
        <taxon>Euteleostomi</taxon>
        <taxon>Mammalia</taxon>
        <taxon>Eutheria</taxon>
        <taxon>Euarchontoglires</taxon>
        <taxon>Glires</taxon>
        <taxon>Rodentia</taxon>
        <taxon>Myomorpha</taxon>
        <taxon>Muroidea</taxon>
        <taxon>Muridae</taxon>
        <taxon>Murinae</taxon>
        <taxon>Mus</taxon>
        <taxon>Mus</taxon>
    </lineage>
</organism>
<feature type="chain" id="PRO_0000440956" description="Protein FAM53A">
    <location>
        <begin position="1"/>
        <end position="402"/>
    </location>
</feature>
<feature type="region of interest" description="Disordered" evidence="4">
    <location>
        <begin position="170"/>
        <end position="215"/>
    </location>
</feature>
<feature type="region of interest" description="Disordered" evidence="4">
    <location>
        <begin position="323"/>
        <end position="402"/>
    </location>
</feature>
<feature type="short sequence motif" description="Nuclear localization signal" evidence="3">
    <location>
        <begin position="273"/>
        <end position="281"/>
    </location>
</feature>
<feature type="compositionally biased region" description="Polar residues" evidence="4">
    <location>
        <begin position="323"/>
        <end position="333"/>
    </location>
</feature>
<feature type="compositionally biased region" description="Low complexity" evidence="4">
    <location>
        <begin position="336"/>
        <end position="345"/>
    </location>
</feature>
<feature type="modified residue" description="Phosphoserine" evidence="2">
    <location>
        <position position="119"/>
    </location>
</feature>
<feature type="modified residue" description="Phosphoserine" evidence="8">
    <location>
        <position position="306"/>
    </location>
</feature>
<feature type="modified residue" description="Phosphoserine" evidence="8">
    <location>
        <position position="309"/>
    </location>
</feature>
<feature type="sequence conflict" description="In Ref. 1; AAL76114." evidence="6" ref="1">
    <original>K</original>
    <variation>R</variation>
    <location>
        <position position="51"/>
    </location>
</feature>
<feature type="sequence conflict" description="In Ref. 1; AAL76114." evidence="6" ref="1">
    <original>L</original>
    <variation>R</variation>
    <location>
        <position position="241"/>
    </location>
</feature>
<feature type="sequence conflict" description="In Ref. 3; AAH28656." evidence="6" ref="3">
    <original>T</original>
    <variation>A</variation>
    <location>
        <position position="300"/>
    </location>
</feature>
<feature type="sequence conflict" description="In Ref. 3; AAH16596/AAH28656." evidence="6" ref="3">
    <original>I</original>
    <variation>V</variation>
    <location>
        <position position="356"/>
    </location>
</feature>
<feature type="sequence conflict" description="In Ref. 3; AAH16596/AAH28656." evidence="6" ref="3">
    <original>N</original>
    <variation>S</variation>
    <location>
        <position position="365"/>
    </location>
</feature>
<gene>
    <name evidence="7" type="primary">Fam53a</name>
    <name evidence="5" type="synonym">Dntnp</name>
</gene>
<comment type="function">
    <text evidence="1">May play an important role in neural development; the dorsomedial roof of the third ventricle.</text>
</comment>
<comment type="subcellular location">
    <subcellularLocation>
        <location evidence="1">Nucleus</location>
    </subcellularLocation>
    <text evidence="1">Subnuclear distribution.</text>
</comment>
<comment type="similarity">
    <text evidence="6">Belongs to the FAM53 family.</text>
</comment>
<protein>
    <recommendedName>
        <fullName evidence="6">Protein FAM53A</fullName>
    </recommendedName>
    <alternativeName>
        <fullName evidence="5">Dorsal neural-tube nuclear protein</fullName>
    </alternativeName>
</protein>
<dbReference type="EMBL" id="AF396665">
    <property type="protein sequence ID" value="AAL76114.1"/>
    <property type="molecule type" value="mRNA"/>
</dbReference>
<dbReference type="EMBL" id="AC132233">
    <property type="status" value="NOT_ANNOTATED_CDS"/>
    <property type="molecule type" value="Genomic_DNA"/>
</dbReference>
<dbReference type="EMBL" id="BC016596">
    <property type="protein sequence ID" value="AAH16596.1"/>
    <property type="molecule type" value="mRNA"/>
</dbReference>
<dbReference type="EMBL" id="BC028656">
    <property type="protein sequence ID" value="AAH28656.1"/>
    <property type="molecule type" value="mRNA"/>
</dbReference>
<dbReference type="CCDS" id="CCDS19203.1"/>
<dbReference type="RefSeq" id="NP_001346390.1">
    <property type="nucleotide sequence ID" value="NM_001359461.1"/>
</dbReference>
<dbReference type="RefSeq" id="NP_001346391.1">
    <property type="nucleotide sequence ID" value="NM_001359462.1"/>
</dbReference>
<dbReference type="RefSeq" id="NP_848477.2">
    <property type="nucleotide sequence ID" value="NM_178390.3"/>
</dbReference>
<dbReference type="RefSeq" id="XP_011239077.1">
    <property type="nucleotide sequence ID" value="XM_011240775.2"/>
</dbReference>
<dbReference type="RefSeq" id="XP_011239078.1">
    <property type="nucleotide sequence ID" value="XM_011240776.4"/>
</dbReference>
<dbReference type="RefSeq" id="XP_017176611.1">
    <property type="nucleotide sequence ID" value="XM_017321122.1"/>
</dbReference>
<dbReference type="FunCoup" id="E9PV82">
    <property type="interactions" value="633"/>
</dbReference>
<dbReference type="STRING" id="10090.ENSMUSP00000045539"/>
<dbReference type="GlyGen" id="E9PV82">
    <property type="glycosylation" value="1 site"/>
</dbReference>
<dbReference type="iPTMnet" id="E9PV82"/>
<dbReference type="PhosphoSitePlus" id="E9PV82"/>
<dbReference type="jPOST" id="E9PV82"/>
<dbReference type="PaxDb" id="10090-ENSMUSP00000070770"/>
<dbReference type="ProteomicsDB" id="271843"/>
<dbReference type="Antibodypedia" id="50275">
    <property type="antibodies" value="46 antibodies from 10 providers"/>
</dbReference>
<dbReference type="DNASU" id="74504"/>
<dbReference type="Ensembl" id="ENSMUST00000045329.10">
    <property type="protein sequence ID" value="ENSMUSP00000045539.4"/>
    <property type="gene ID" value="ENSMUSG00000037339.18"/>
</dbReference>
<dbReference type="Ensembl" id="ENSMUST00000065119.15">
    <property type="protein sequence ID" value="ENSMUSP00000070770.9"/>
    <property type="gene ID" value="ENSMUSG00000037339.18"/>
</dbReference>
<dbReference type="GeneID" id="74504"/>
<dbReference type="KEGG" id="mmu:74504"/>
<dbReference type="UCSC" id="uc008xat.2">
    <property type="organism name" value="mouse"/>
</dbReference>
<dbReference type="AGR" id="MGI:1919225"/>
<dbReference type="CTD" id="152877"/>
<dbReference type="MGI" id="MGI:1919225">
    <property type="gene designation" value="Fam53a"/>
</dbReference>
<dbReference type="VEuPathDB" id="HostDB:ENSMUSG00000037339"/>
<dbReference type="eggNOG" id="ENOG502RUYA">
    <property type="taxonomic scope" value="Eukaryota"/>
</dbReference>
<dbReference type="GeneTree" id="ENSGT00530000063371"/>
<dbReference type="HOGENOM" id="CLU_054215_0_0_1"/>
<dbReference type="InParanoid" id="E9PV82"/>
<dbReference type="OMA" id="PWASWEP"/>
<dbReference type="OrthoDB" id="10026856at2759"/>
<dbReference type="PhylomeDB" id="E9PV82"/>
<dbReference type="TreeFam" id="TF332095"/>
<dbReference type="BioGRID-ORCS" id="74504">
    <property type="hits" value="4 hits in 79 CRISPR screens"/>
</dbReference>
<dbReference type="ChiTaRS" id="Fam53a">
    <property type="organism name" value="mouse"/>
</dbReference>
<dbReference type="PRO" id="PR:E9PV82"/>
<dbReference type="Proteomes" id="UP000000589">
    <property type="component" value="Chromosome 5"/>
</dbReference>
<dbReference type="RNAct" id="E9PV82">
    <property type="molecule type" value="protein"/>
</dbReference>
<dbReference type="Bgee" id="ENSMUSG00000037339">
    <property type="expression patterns" value="Expressed in hindlimb stylopod muscle and 261 other cell types or tissues"/>
</dbReference>
<dbReference type="ExpressionAtlas" id="E9PV82">
    <property type="expression patterns" value="baseline and differential"/>
</dbReference>
<dbReference type="GO" id="GO:0005634">
    <property type="term" value="C:nucleus"/>
    <property type="evidence" value="ECO:0000266"/>
    <property type="project" value="MGI"/>
</dbReference>
<dbReference type="GO" id="GO:0006606">
    <property type="term" value="P:protein import into nucleus"/>
    <property type="evidence" value="ECO:0000266"/>
    <property type="project" value="MGI"/>
</dbReference>
<dbReference type="InterPro" id="IPR029356">
    <property type="entry name" value="FAM53"/>
</dbReference>
<dbReference type="PANTHER" id="PTHR28567:SF2">
    <property type="entry name" value="PROTEIN FAM53A"/>
    <property type="match status" value="1"/>
</dbReference>
<dbReference type="PANTHER" id="PTHR28567">
    <property type="entry name" value="PROTEIN FAM53A-LIKE ISOFORM X1"/>
    <property type="match status" value="1"/>
</dbReference>
<dbReference type="Pfam" id="PF15242">
    <property type="entry name" value="FAM53"/>
    <property type="match status" value="1"/>
</dbReference>